<dbReference type="EC" id="7.1.1.-" evidence="1"/>
<dbReference type="EMBL" id="CT978603">
    <property type="protein sequence ID" value="CAK29160.1"/>
    <property type="molecule type" value="Genomic_DNA"/>
</dbReference>
<dbReference type="SMR" id="A5GWA1"/>
<dbReference type="STRING" id="316278.SynRCC307_2257"/>
<dbReference type="KEGG" id="syr:SynRCC307_2257"/>
<dbReference type="eggNOG" id="COG0649">
    <property type="taxonomic scope" value="Bacteria"/>
</dbReference>
<dbReference type="HOGENOM" id="CLU_015134_1_2_3"/>
<dbReference type="OrthoDB" id="9801496at2"/>
<dbReference type="Proteomes" id="UP000001115">
    <property type="component" value="Chromosome"/>
</dbReference>
<dbReference type="GO" id="GO:0031676">
    <property type="term" value="C:plasma membrane-derived thylakoid membrane"/>
    <property type="evidence" value="ECO:0007669"/>
    <property type="project" value="UniProtKB-SubCell"/>
</dbReference>
<dbReference type="GO" id="GO:0051287">
    <property type="term" value="F:NAD binding"/>
    <property type="evidence" value="ECO:0007669"/>
    <property type="project" value="InterPro"/>
</dbReference>
<dbReference type="GO" id="GO:0016655">
    <property type="term" value="F:oxidoreductase activity, acting on NAD(P)H, quinone or similar compound as acceptor"/>
    <property type="evidence" value="ECO:0007669"/>
    <property type="project" value="UniProtKB-UniRule"/>
</dbReference>
<dbReference type="GO" id="GO:0048038">
    <property type="term" value="F:quinone binding"/>
    <property type="evidence" value="ECO:0007669"/>
    <property type="project" value="UniProtKB-KW"/>
</dbReference>
<dbReference type="GO" id="GO:0019684">
    <property type="term" value="P:photosynthesis, light reaction"/>
    <property type="evidence" value="ECO:0007669"/>
    <property type="project" value="UniProtKB-UniRule"/>
</dbReference>
<dbReference type="Gene3D" id="1.10.645.10">
    <property type="entry name" value="Cytochrome-c3 Hydrogenase, chain B"/>
    <property type="match status" value="1"/>
</dbReference>
<dbReference type="HAMAP" id="MF_01358">
    <property type="entry name" value="NDH1_NuoD"/>
    <property type="match status" value="1"/>
</dbReference>
<dbReference type="InterPro" id="IPR001135">
    <property type="entry name" value="NADH_Q_OxRdtase_suD"/>
</dbReference>
<dbReference type="InterPro" id="IPR014029">
    <property type="entry name" value="NADH_UbQ_OxRdtase_49kDa_CS"/>
</dbReference>
<dbReference type="InterPro" id="IPR022885">
    <property type="entry name" value="NDH1_su_D/H"/>
</dbReference>
<dbReference type="InterPro" id="IPR029014">
    <property type="entry name" value="NiFe-Hase_large"/>
</dbReference>
<dbReference type="NCBIfam" id="NF004739">
    <property type="entry name" value="PRK06075.1"/>
    <property type="match status" value="1"/>
</dbReference>
<dbReference type="NCBIfam" id="NF005649">
    <property type="entry name" value="PRK07415.1"/>
    <property type="match status" value="1"/>
</dbReference>
<dbReference type="PANTHER" id="PTHR11993:SF10">
    <property type="entry name" value="NADH DEHYDROGENASE [UBIQUINONE] IRON-SULFUR PROTEIN 2, MITOCHONDRIAL"/>
    <property type="match status" value="1"/>
</dbReference>
<dbReference type="PANTHER" id="PTHR11993">
    <property type="entry name" value="NADH-UBIQUINONE OXIDOREDUCTASE 49 KDA SUBUNIT"/>
    <property type="match status" value="1"/>
</dbReference>
<dbReference type="Pfam" id="PF00346">
    <property type="entry name" value="Complex1_49kDa"/>
    <property type="match status" value="1"/>
</dbReference>
<dbReference type="SUPFAM" id="SSF56762">
    <property type="entry name" value="HydB/Nqo4-like"/>
    <property type="match status" value="1"/>
</dbReference>
<dbReference type="PROSITE" id="PS00535">
    <property type="entry name" value="COMPLEX1_49K"/>
    <property type="match status" value="1"/>
</dbReference>
<sequence>MTQLETRTEPMVLNFGPHHPSMHGVLRLVVTLDGEDVVDCEPVIGYLHRGMEKIAENRTNVMFVPYVSRWDYAAGMFNEAITVNAPERLADVKVPRRASYIRVMMLELNRIANHLLWLGPFLADVGAQTPFFYIFREREMIYDLWEAATGQRMVNNNYFRIGGVAADLPYGWLEKLDDFCNWFGPKIDEYEKLITNNPIFRRRIEGLGTITREQAINWSLSGPMLRASGVAWDLRKVDHYECYDDFDWEVATAQEGCCFARYRVRLQEMRESLKILRQAAQQIPGGPTENLEAKRQLEGKDSEFYGFDYQIVAKKVAPTFKIPNGQLYTRVESGKGELGVFLMGNNDVTPWRWKIRAADFNNLQILPHLLKGVKVADIMAILGSIDVIMGSVDR</sequence>
<feature type="chain" id="PRO_0000371938" description="NAD(P)H-quinone oxidoreductase subunit H">
    <location>
        <begin position="1"/>
        <end position="394"/>
    </location>
</feature>
<gene>
    <name evidence="1" type="primary">ndhH</name>
    <name type="ordered locus">SynRCC307_2257</name>
</gene>
<evidence type="ECO:0000255" key="1">
    <source>
        <dbReference type="HAMAP-Rule" id="MF_01358"/>
    </source>
</evidence>
<name>NDHH_SYNR3</name>
<proteinExistence type="inferred from homology"/>
<reference key="1">
    <citation type="submission" date="2006-05" db="EMBL/GenBank/DDBJ databases">
        <authorList>
            <consortium name="Genoscope"/>
        </authorList>
    </citation>
    <scope>NUCLEOTIDE SEQUENCE [LARGE SCALE GENOMIC DNA]</scope>
    <source>
        <strain>RCC307</strain>
    </source>
</reference>
<accession>A5GWA1</accession>
<protein>
    <recommendedName>
        <fullName evidence="1">NAD(P)H-quinone oxidoreductase subunit H</fullName>
        <ecNumber evidence="1">7.1.1.-</ecNumber>
    </recommendedName>
    <alternativeName>
        <fullName>NAD(P)H dehydrogenase subunit H</fullName>
    </alternativeName>
    <alternativeName>
        <fullName evidence="1">NADH-plastoquinone oxidoreductase subunit H</fullName>
    </alternativeName>
    <alternativeName>
        <fullName evidence="1">NDH-1 subunit H</fullName>
        <shortName evidence="1">NDH-H</shortName>
    </alternativeName>
</protein>
<organism>
    <name type="scientific">Synechococcus sp. (strain RCC307)</name>
    <dbReference type="NCBI Taxonomy" id="316278"/>
    <lineage>
        <taxon>Bacteria</taxon>
        <taxon>Bacillati</taxon>
        <taxon>Cyanobacteriota</taxon>
        <taxon>Cyanophyceae</taxon>
        <taxon>Synechococcales</taxon>
        <taxon>Synechococcaceae</taxon>
        <taxon>Synechococcus</taxon>
    </lineage>
</organism>
<comment type="function">
    <text evidence="1">NDH-1 shuttles electrons from an unknown electron donor, via FMN and iron-sulfur (Fe-S) centers, to quinones in the respiratory and/or the photosynthetic chain. The immediate electron acceptor for the enzyme in this species is believed to be plastoquinone. Couples the redox reaction to proton translocation, and thus conserves the redox energy in a proton gradient. Cyanobacterial NDH-1 also plays a role in inorganic carbon-concentration.</text>
</comment>
<comment type="catalytic activity">
    <reaction evidence="1">
        <text>a plastoquinone + NADH + (n+1) H(+)(in) = a plastoquinol + NAD(+) + n H(+)(out)</text>
        <dbReference type="Rhea" id="RHEA:42608"/>
        <dbReference type="Rhea" id="RHEA-COMP:9561"/>
        <dbReference type="Rhea" id="RHEA-COMP:9562"/>
        <dbReference type="ChEBI" id="CHEBI:15378"/>
        <dbReference type="ChEBI" id="CHEBI:17757"/>
        <dbReference type="ChEBI" id="CHEBI:57540"/>
        <dbReference type="ChEBI" id="CHEBI:57945"/>
        <dbReference type="ChEBI" id="CHEBI:62192"/>
    </reaction>
</comment>
<comment type="catalytic activity">
    <reaction evidence="1">
        <text>a plastoquinone + NADPH + (n+1) H(+)(in) = a plastoquinol + NADP(+) + n H(+)(out)</text>
        <dbReference type="Rhea" id="RHEA:42612"/>
        <dbReference type="Rhea" id="RHEA-COMP:9561"/>
        <dbReference type="Rhea" id="RHEA-COMP:9562"/>
        <dbReference type="ChEBI" id="CHEBI:15378"/>
        <dbReference type="ChEBI" id="CHEBI:17757"/>
        <dbReference type="ChEBI" id="CHEBI:57783"/>
        <dbReference type="ChEBI" id="CHEBI:58349"/>
        <dbReference type="ChEBI" id="CHEBI:62192"/>
    </reaction>
</comment>
<comment type="subunit">
    <text evidence="1">NDH-1 can be composed of about 15 different subunits; different subcomplexes with different compositions have been identified which probably have different functions.</text>
</comment>
<comment type="subcellular location">
    <subcellularLocation>
        <location evidence="1">Cellular thylakoid membrane</location>
        <topology evidence="1">Peripheral membrane protein</topology>
        <orientation evidence="1">Cytoplasmic side</orientation>
    </subcellularLocation>
</comment>
<comment type="similarity">
    <text evidence="1">Belongs to the complex I 49 kDa subunit family.</text>
</comment>
<keyword id="KW-0472">Membrane</keyword>
<keyword id="KW-0520">NAD</keyword>
<keyword id="KW-0521">NADP</keyword>
<keyword id="KW-0618">Plastoquinone</keyword>
<keyword id="KW-0874">Quinone</keyword>
<keyword id="KW-1185">Reference proteome</keyword>
<keyword id="KW-0793">Thylakoid</keyword>
<keyword id="KW-1278">Translocase</keyword>
<keyword id="KW-0813">Transport</keyword>